<accession>B0BQL3</accession>
<keyword id="KW-0963">Cytoplasm</keyword>
<keyword id="KW-0378">Hydrolase</keyword>
<keyword id="KW-0645">Protease</keyword>
<keyword id="KW-0720">Serine protease</keyword>
<gene>
    <name evidence="1" type="primary">clpP</name>
    <name type="ordered locus">APJL_1292</name>
</gene>
<organism>
    <name type="scientific">Actinobacillus pleuropneumoniae serotype 3 (strain JL03)</name>
    <dbReference type="NCBI Taxonomy" id="434271"/>
    <lineage>
        <taxon>Bacteria</taxon>
        <taxon>Pseudomonadati</taxon>
        <taxon>Pseudomonadota</taxon>
        <taxon>Gammaproteobacteria</taxon>
        <taxon>Pasteurellales</taxon>
        <taxon>Pasteurellaceae</taxon>
        <taxon>Actinobacillus</taxon>
    </lineage>
</organism>
<evidence type="ECO:0000255" key="1">
    <source>
        <dbReference type="HAMAP-Rule" id="MF_00444"/>
    </source>
</evidence>
<feature type="chain" id="PRO_1000189626" description="ATP-dependent Clp protease proteolytic subunit">
    <location>
        <begin position="1"/>
        <end position="196"/>
    </location>
</feature>
<feature type="active site" description="Nucleophile" evidence="1">
    <location>
        <position position="98"/>
    </location>
</feature>
<feature type="active site" evidence="1">
    <location>
        <position position="123"/>
    </location>
</feature>
<sequence>MALVPIVVEQTSKGERSYDIYSRLLKERIIFLTGQVEDHMANLIVAQMLFLEAEDPEKDIYLYINSPGGVVTAGLAIYDTMNFIKPDVATLCTGQACSMGAFLLSGGAKGKRFALPNARVMIHQPLGGARGQATDIQIQAQEILKLKEMLTRKMAEHSGQPFEKVAADTERDNFMSAVEAMEYGLIDKVLTHRDMK</sequence>
<dbReference type="EC" id="3.4.21.92" evidence="1"/>
<dbReference type="EMBL" id="CP000687">
    <property type="protein sequence ID" value="ABY69848.1"/>
    <property type="molecule type" value="Genomic_DNA"/>
</dbReference>
<dbReference type="RefSeq" id="WP_005598326.1">
    <property type="nucleotide sequence ID" value="NC_010278.1"/>
</dbReference>
<dbReference type="SMR" id="B0BQL3"/>
<dbReference type="MEROPS" id="S14.001"/>
<dbReference type="GeneID" id="48599522"/>
<dbReference type="KEGG" id="apj:APJL_1292"/>
<dbReference type="HOGENOM" id="CLU_058707_3_2_6"/>
<dbReference type="Proteomes" id="UP000008547">
    <property type="component" value="Chromosome"/>
</dbReference>
<dbReference type="GO" id="GO:0005737">
    <property type="term" value="C:cytoplasm"/>
    <property type="evidence" value="ECO:0007669"/>
    <property type="project" value="UniProtKB-SubCell"/>
</dbReference>
<dbReference type="GO" id="GO:0009368">
    <property type="term" value="C:endopeptidase Clp complex"/>
    <property type="evidence" value="ECO:0007669"/>
    <property type="project" value="TreeGrafter"/>
</dbReference>
<dbReference type="GO" id="GO:0004176">
    <property type="term" value="F:ATP-dependent peptidase activity"/>
    <property type="evidence" value="ECO:0007669"/>
    <property type="project" value="InterPro"/>
</dbReference>
<dbReference type="GO" id="GO:0051117">
    <property type="term" value="F:ATPase binding"/>
    <property type="evidence" value="ECO:0007669"/>
    <property type="project" value="TreeGrafter"/>
</dbReference>
<dbReference type="GO" id="GO:0004252">
    <property type="term" value="F:serine-type endopeptidase activity"/>
    <property type="evidence" value="ECO:0007669"/>
    <property type="project" value="UniProtKB-UniRule"/>
</dbReference>
<dbReference type="GO" id="GO:0006515">
    <property type="term" value="P:protein quality control for misfolded or incompletely synthesized proteins"/>
    <property type="evidence" value="ECO:0007669"/>
    <property type="project" value="TreeGrafter"/>
</dbReference>
<dbReference type="CDD" id="cd07017">
    <property type="entry name" value="S14_ClpP_2"/>
    <property type="match status" value="1"/>
</dbReference>
<dbReference type="FunFam" id="3.90.226.10:FF:000001">
    <property type="entry name" value="ATP-dependent Clp protease proteolytic subunit"/>
    <property type="match status" value="1"/>
</dbReference>
<dbReference type="Gene3D" id="3.90.226.10">
    <property type="entry name" value="2-enoyl-CoA Hydratase, Chain A, domain 1"/>
    <property type="match status" value="1"/>
</dbReference>
<dbReference type="HAMAP" id="MF_00444">
    <property type="entry name" value="ClpP"/>
    <property type="match status" value="1"/>
</dbReference>
<dbReference type="InterPro" id="IPR001907">
    <property type="entry name" value="ClpP"/>
</dbReference>
<dbReference type="InterPro" id="IPR029045">
    <property type="entry name" value="ClpP/crotonase-like_dom_sf"/>
</dbReference>
<dbReference type="InterPro" id="IPR023562">
    <property type="entry name" value="ClpP/TepA"/>
</dbReference>
<dbReference type="InterPro" id="IPR033135">
    <property type="entry name" value="ClpP_His_AS"/>
</dbReference>
<dbReference type="NCBIfam" id="TIGR00493">
    <property type="entry name" value="clpP"/>
    <property type="match status" value="1"/>
</dbReference>
<dbReference type="NCBIfam" id="NF001368">
    <property type="entry name" value="PRK00277.1"/>
    <property type="match status" value="1"/>
</dbReference>
<dbReference type="NCBIfam" id="NF009205">
    <property type="entry name" value="PRK12553.1"/>
    <property type="match status" value="1"/>
</dbReference>
<dbReference type="PANTHER" id="PTHR10381">
    <property type="entry name" value="ATP-DEPENDENT CLP PROTEASE PROTEOLYTIC SUBUNIT"/>
    <property type="match status" value="1"/>
</dbReference>
<dbReference type="PANTHER" id="PTHR10381:SF70">
    <property type="entry name" value="ATP-DEPENDENT CLP PROTEASE PROTEOLYTIC SUBUNIT"/>
    <property type="match status" value="1"/>
</dbReference>
<dbReference type="Pfam" id="PF00574">
    <property type="entry name" value="CLP_protease"/>
    <property type="match status" value="1"/>
</dbReference>
<dbReference type="PRINTS" id="PR00127">
    <property type="entry name" value="CLPPROTEASEP"/>
</dbReference>
<dbReference type="SUPFAM" id="SSF52096">
    <property type="entry name" value="ClpP/crotonase"/>
    <property type="match status" value="1"/>
</dbReference>
<dbReference type="PROSITE" id="PS00382">
    <property type="entry name" value="CLP_PROTEASE_HIS"/>
    <property type="match status" value="1"/>
</dbReference>
<proteinExistence type="inferred from homology"/>
<protein>
    <recommendedName>
        <fullName evidence="1">ATP-dependent Clp protease proteolytic subunit</fullName>
        <ecNumber evidence="1">3.4.21.92</ecNumber>
    </recommendedName>
    <alternativeName>
        <fullName evidence="1">Endopeptidase Clp</fullName>
    </alternativeName>
</protein>
<comment type="function">
    <text evidence="1">Cleaves peptides in various proteins in a process that requires ATP hydrolysis. Has a chymotrypsin-like activity. Plays a major role in the degradation of misfolded proteins.</text>
</comment>
<comment type="catalytic activity">
    <reaction evidence="1">
        <text>Hydrolysis of proteins to small peptides in the presence of ATP and magnesium. alpha-casein is the usual test substrate. In the absence of ATP, only oligopeptides shorter than five residues are hydrolyzed (such as succinyl-Leu-Tyr-|-NHMec, and Leu-Tyr-Leu-|-Tyr-Trp, in which cleavage of the -Tyr-|-Leu- and -Tyr-|-Trp bonds also occurs).</text>
        <dbReference type="EC" id="3.4.21.92"/>
    </reaction>
</comment>
<comment type="subunit">
    <text evidence="1">Fourteen ClpP subunits assemble into 2 heptameric rings which stack back to back to give a disk-like structure with a central cavity, resembling the structure of eukaryotic proteasomes.</text>
</comment>
<comment type="subcellular location">
    <subcellularLocation>
        <location evidence="1">Cytoplasm</location>
    </subcellularLocation>
</comment>
<comment type="similarity">
    <text evidence="1">Belongs to the peptidase S14 family.</text>
</comment>
<reference key="1">
    <citation type="journal article" date="2008" name="PLoS ONE">
        <title>Genome biology of Actinobacillus pleuropneumoniae JL03, an isolate of serotype 3 prevalent in China.</title>
        <authorList>
            <person name="Xu Z."/>
            <person name="Zhou Y."/>
            <person name="Li L."/>
            <person name="Zhou R."/>
            <person name="Xiao S."/>
            <person name="Wan Y."/>
            <person name="Zhang S."/>
            <person name="Wang K."/>
            <person name="Li W."/>
            <person name="Li L."/>
            <person name="Jin H."/>
            <person name="Kang M."/>
            <person name="Dalai B."/>
            <person name="Li T."/>
            <person name="Liu L."/>
            <person name="Cheng Y."/>
            <person name="Zhang L."/>
            <person name="Xu T."/>
            <person name="Zheng H."/>
            <person name="Pu S."/>
            <person name="Wang B."/>
            <person name="Gu W."/>
            <person name="Zhang X.L."/>
            <person name="Zhu G.-F."/>
            <person name="Wang S."/>
            <person name="Zhao G.-P."/>
            <person name="Chen H."/>
        </authorList>
    </citation>
    <scope>NUCLEOTIDE SEQUENCE [LARGE SCALE GENOMIC DNA]</scope>
    <source>
        <strain>JL03</strain>
    </source>
</reference>
<name>CLPP_ACTPJ</name>